<keyword id="KW-0460">Magnesium</keyword>
<keyword id="KW-0479">Metal-binding</keyword>
<keyword id="KW-1185">Reference proteome</keyword>
<keyword id="KW-0808">Transferase</keyword>
<gene>
    <name evidence="1" type="primary">uppS</name>
    <name type="ordered locus">NGO_1797</name>
</gene>
<dbReference type="EC" id="2.5.1.-" evidence="1"/>
<dbReference type="EMBL" id="AE004969">
    <property type="protein sequence ID" value="AAW90415.1"/>
    <property type="molecule type" value="Genomic_DNA"/>
</dbReference>
<dbReference type="RefSeq" id="WP_003690027.1">
    <property type="nucleotide sequence ID" value="NC_002946.2"/>
</dbReference>
<dbReference type="RefSeq" id="YP_208827.1">
    <property type="nucleotide sequence ID" value="NC_002946.2"/>
</dbReference>
<dbReference type="SMR" id="Q5F5X2"/>
<dbReference type="STRING" id="242231.NGO_1797"/>
<dbReference type="KEGG" id="ngo:NGO_1797"/>
<dbReference type="PATRIC" id="fig|242231.10.peg.2157"/>
<dbReference type="HOGENOM" id="CLU_038505_1_1_4"/>
<dbReference type="Proteomes" id="UP000000535">
    <property type="component" value="Chromosome"/>
</dbReference>
<dbReference type="GO" id="GO:0005829">
    <property type="term" value="C:cytosol"/>
    <property type="evidence" value="ECO:0007669"/>
    <property type="project" value="TreeGrafter"/>
</dbReference>
<dbReference type="GO" id="GO:0008834">
    <property type="term" value="F:ditrans,polycis-undecaprenyl-diphosphate synthase [(2E,6E)-farnesyl-diphosphate specific] activity"/>
    <property type="evidence" value="ECO:0007669"/>
    <property type="project" value="TreeGrafter"/>
</dbReference>
<dbReference type="GO" id="GO:0000287">
    <property type="term" value="F:magnesium ion binding"/>
    <property type="evidence" value="ECO:0007669"/>
    <property type="project" value="UniProtKB-UniRule"/>
</dbReference>
<dbReference type="GO" id="GO:0016094">
    <property type="term" value="P:polyprenol biosynthetic process"/>
    <property type="evidence" value="ECO:0007669"/>
    <property type="project" value="TreeGrafter"/>
</dbReference>
<dbReference type="CDD" id="cd00475">
    <property type="entry name" value="Cis_IPPS"/>
    <property type="match status" value="1"/>
</dbReference>
<dbReference type="FunFam" id="3.40.1180.10:FF:000001">
    <property type="entry name" value="(2E,6E)-farnesyl-diphosphate-specific ditrans,polycis-undecaprenyl-diphosphate synthase"/>
    <property type="match status" value="1"/>
</dbReference>
<dbReference type="Gene3D" id="3.40.1180.10">
    <property type="entry name" value="Decaprenyl diphosphate synthase-like"/>
    <property type="match status" value="1"/>
</dbReference>
<dbReference type="HAMAP" id="MF_01139">
    <property type="entry name" value="ISPT"/>
    <property type="match status" value="1"/>
</dbReference>
<dbReference type="InterPro" id="IPR001441">
    <property type="entry name" value="UPP_synth-like"/>
</dbReference>
<dbReference type="InterPro" id="IPR018520">
    <property type="entry name" value="UPP_synth-like_CS"/>
</dbReference>
<dbReference type="InterPro" id="IPR036424">
    <property type="entry name" value="UPP_synth-like_sf"/>
</dbReference>
<dbReference type="NCBIfam" id="NF011405">
    <property type="entry name" value="PRK14830.1"/>
    <property type="match status" value="1"/>
</dbReference>
<dbReference type="NCBIfam" id="TIGR00055">
    <property type="entry name" value="uppS"/>
    <property type="match status" value="1"/>
</dbReference>
<dbReference type="PANTHER" id="PTHR10291:SF0">
    <property type="entry name" value="DEHYDRODOLICHYL DIPHOSPHATE SYNTHASE 2"/>
    <property type="match status" value="1"/>
</dbReference>
<dbReference type="PANTHER" id="PTHR10291">
    <property type="entry name" value="DEHYDRODOLICHYL DIPHOSPHATE SYNTHASE FAMILY MEMBER"/>
    <property type="match status" value="1"/>
</dbReference>
<dbReference type="Pfam" id="PF01255">
    <property type="entry name" value="Prenyltransf"/>
    <property type="match status" value="1"/>
</dbReference>
<dbReference type="SUPFAM" id="SSF64005">
    <property type="entry name" value="Undecaprenyl diphosphate synthase"/>
    <property type="match status" value="1"/>
</dbReference>
<dbReference type="PROSITE" id="PS01066">
    <property type="entry name" value="UPP_SYNTHASE"/>
    <property type="match status" value="1"/>
</dbReference>
<feature type="chain" id="PRO_0000123642" description="Isoprenyl transferase">
    <location>
        <begin position="1"/>
        <end position="248"/>
    </location>
</feature>
<feature type="active site" evidence="1">
    <location>
        <position position="23"/>
    </location>
</feature>
<feature type="active site" description="Proton acceptor" evidence="1">
    <location>
        <position position="71"/>
    </location>
</feature>
<feature type="binding site" evidence="1">
    <location>
        <position position="23"/>
    </location>
    <ligand>
        <name>Mg(2+)</name>
        <dbReference type="ChEBI" id="CHEBI:18420"/>
    </ligand>
</feature>
<feature type="binding site" evidence="1">
    <location>
        <begin position="24"/>
        <end position="27"/>
    </location>
    <ligand>
        <name>substrate</name>
    </ligand>
</feature>
<feature type="binding site" evidence="1">
    <location>
        <position position="28"/>
    </location>
    <ligand>
        <name>substrate</name>
    </ligand>
</feature>
<feature type="binding site" evidence="1">
    <location>
        <position position="36"/>
    </location>
    <ligand>
        <name>substrate</name>
    </ligand>
</feature>
<feature type="binding site" evidence="1">
    <location>
        <position position="40"/>
    </location>
    <ligand>
        <name>substrate</name>
    </ligand>
</feature>
<feature type="binding site" evidence="1">
    <location>
        <begin position="68"/>
        <end position="70"/>
    </location>
    <ligand>
        <name>substrate</name>
    </ligand>
</feature>
<feature type="binding site" evidence="1">
    <location>
        <position position="72"/>
    </location>
    <ligand>
        <name>substrate</name>
    </ligand>
</feature>
<feature type="binding site" evidence="1">
    <location>
        <position position="74"/>
    </location>
    <ligand>
        <name>substrate</name>
    </ligand>
</feature>
<feature type="binding site" evidence="1">
    <location>
        <position position="185"/>
    </location>
    <ligand>
        <name>substrate</name>
    </ligand>
</feature>
<feature type="binding site" evidence="1">
    <location>
        <begin position="191"/>
        <end position="193"/>
    </location>
    <ligand>
        <name>substrate</name>
    </ligand>
</feature>
<feature type="binding site" evidence="1">
    <location>
        <position position="204"/>
    </location>
    <ligand>
        <name>Mg(2+)</name>
        <dbReference type="ChEBI" id="CHEBI:18420"/>
    </ligand>
</feature>
<reference key="1">
    <citation type="submission" date="2003-03" db="EMBL/GenBank/DDBJ databases">
        <title>The complete genome sequence of Neisseria gonorrhoeae.</title>
        <authorList>
            <person name="Lewis L.A."/>
            <person name="Gillaspy A.F."/>
            <person name="McLaughlin R.E."/>
            <person name="Gipson M."/>
            <person name="Ducey T.F."/>
            <person name="Ownbey T."/>
            <person name="Hartman K."/>
            <person name="Nydick C."/>
            <person name="Carson M.B."/>
            <person name="Vaughn J."/>
            <person name="Thomson C."/>
            <person name="Song L."/>
            <person name="Lin S."/>
            <person name="Yuan X."/>
            <person name="Najar F."/>
            <person name="Zhan M."/>
            <person name="Ren Q."/>
            <person name="Zhu H."/>
            <person name="Qi S."/>
            <person name="Kenton S.M."/>
            <person name="Lai H."/>
            <person name="White J.D."/>
            <person name="Clifton S."/>
            <person name="Roe B.A."/>
            <person name="Dyer D.W."/>
        </authorList>
    </citation>
    <scope>NUCLEOTIDE SEQUENCE [LARGE SCALE GENOMIC DNA]</scope>
    <source>
        <strain>ATCC 700825 / FA 1090</strain>
    </source>
</reference>
<sequence length="248" mass="28345">MKSSTQTILEHTAIPRHIAVIMDGNGRWAKKRFLPRIMGHKRGLDALENMVKHCAKLGVQYLTVFAFSTENWRRPEDEVSFLMGLFLQALQKQVRRLHENNMRLKILGSRERFNRQILQGIEEAEALTANNTGLTLSIAADYGGRWDILQAANKLIAEGVSEITEDTLAKHLMLGDAPEPDLFIRTGGETRISNFLLWQMAYAELYFTDILWPDFDETALDAAVASFQKRERRFGRTSEQLPIGQQRN</sequence>
<comment type="function">
    <text evidence="1">Catalyzes the condensation of isopentenyl diphosphate (IPP) with allylic pyrophosphates generating different type of terpenoids.</text>
</comment>
<comment type="cofactor">
    <cofactor evidence="1">
        <name>Mg(2+)</name>
        <dbReference type="ChEBI" id="CHEBI:18420"/>
    </cofactor>
    <text evidence="1">Binds 2 magnesium ions per subunit.</text>
</comment>
<comment type="subunit">
    <text evidence="1">Homodimer.</text>
</comment>
<comment type="similarity">
    <text evidence="1">Belongs to the UPP synthase family.</text>
</comment>
<evidence type="ECO:0000255" key="1">
    <source>
        <dbReference type="HAMAP-Rule" id="MF_01139"/>
    </source>
</evidence>
<proteinExistence type="inferred from homology"/>
<accession>Q5F5X2</accession>
<protein>
    <recommendedName>
        <fullName evidence="1">Isoprenyl transferase</fullName>
        <ecNumber evidence="1">2.5.1.-</ecNumber>
    </recommendedName>
</protein>
<organism>
    <name type="scientific">Neisseria gonorrhoeae (strain ATCC 700825 / FA 1090)</name>
    <dbReference type="NCBI Taxonomy" id="242231"/>
    <lineage>
        <taxon>Bacteria</taxon>
        <taxon>Pseudomonadati</taxon>
        <taxon>Pseudomonadota</taxon>
        <taxon>Betaproteobacteria</taxon>
        <taxon>Neisseriales</taxon>
        <taxon>Neisseriaceae</taxon>
        <taxon>Neisseria</taxon>
    </lineage>
</organism>
<name>ISPT_NEIG1</name>